<sequence>MDNESHSQETESKILEGAKVATRRRRVTRACDMCRRKKIKCDGLRPCKNCKAGKLECTYHMPSSRKSSFSPEYVENLESRVRYLETLLKKNTNFDLSSNSPSFLFFLREQKFQATNELENMSPERKVIFTSMINYGNLFVDAKHGTRYFRGGSSIHVLIQHLIRRLPGDFEICEPYSAYPLGNKNIQFDDNDPEYQFFTPTPRFSIDFMVSSVDPREIQLPGIEEALCITKAAVSYVSGIVFYTTYADFPKKIRLLYSGNYQGNFFPLFLSILCVGYYHHLLNNPSNTELQSLIKKYSFYSERLVKSADNFTIESIQCLLILSIYRYCRTEISAAWYYMKLGLNCCLRLGLHRNITEGFTEEQIDSRRRIFWAIYCYDRQLCTLFGFPLGVRDEDIDQCLPVTPKFPSVTEIEANARLFFFHGVKLYKISSRILTKLYSPNSRNVTKKHISYAVIQDLEQLLDGFYNSLPRVFRAEQPGEFQANHFFYNLQLVYYSFRMLIYRPLLHYLEADSPAMQALKVPDRQTAFTLACKCVDSAIVCVQNLSHLSKGLKRTLDRYYWTTVYCGFSTIVTLIFAALLTKNTNLLIHISVARESIEALAHECVTRRLLPLIDKMRESLMKILESNADGYKQMSPTKAPQVFESESNVPINNGPQQSIDKESNSNTQLPQVETEGQQQSVFDGNIGTIPYQAYNMNEDSFIDINTLSSMLNYHTQAVSIHHPSFYISRSDVPLEEEFQIPNELLAVDPVAESMQENSDIINEAFGLVDPDVSDGKSRESSSLNNSTPFNPTVNIDPASILEHFSQNVMKDSQNS</sequence>
<comment type="subcellular location">
    <subcellularLocation>
        <location evidence="4">Cytoplasm</location>
    </subcellularLocation>
    <subcellularLocation>
        <location evidence="2 4">Nucleus membrane</location>
        <topology evidence="4">Single-pass membrane protein</topology>
    </subcellularLocation>
</comment>
<organism>
    <name type="scientific">Schizosaccharomyces pombe (strain 972 / ATCC 24843)</name>
    <name type="common">Fission yeast</name>
    <dbReference type="NCBI Taxonomy" id="284812"/>
    <lineage>
        <taxon>Eukaryota</taxon>
        <taxon>Fungi</taxon>
        <taxon>Dikarya</taxon>
        <taxon>Ascomycota</taxon>
        <taxon>Taphrinomycotina</taxon>
        <taxon>Schizosaccharomycetes</taxon>
        <taxon>Schizosaccharomycetales</taxon>
        <taxon>Schizosaccharomycetaceae</taxon>
        <taxon>Schizosaccharomyces</taxon>
    </lineage>
</organism>
<gene>
    <name type="ORF">SPBC530.08</name>
</gene>
<reference key="1">
    <citation type="journal article" date="2002" name="Nature">
        <title>The genome sequence of Schizosaccharomyces pombe.</title>
        <authorList>
            <person name="Wood V."/>
            <person name="Gwilliam R."/>
            <person name="Rajandream M.A."/>
            <person name="Lyne M.H."/>
            <person name="Lyne R."/>
            <person name="Stewart A."/>
            <person name="Sgouros J.G."/>
            <person name="Peat N."/>
            <person name="Hayles J."/>
            <person name="Baker S.G."/>
            <person name="Basham D."/>
            <person name="Bowman S."/>
            <person name="Brooks K."/>
            <person name="Brown D."/>
            <person name="Brown S."/>
            <person name="Chillingworth T."/>
            <person name="Churcher C.M."/>
            <person name="Collins M."/>
            <person name="Connor R."/>
            <person name="Cronin A."/>
            <person name="Davis P."/>
            <person name="Feltwell T."/>
            <person name="Fraser A."/>
            <person name="Gentles S."/>
            <person name="Goble A."/>
            <person name="Hamlin N."/>
            <person name="Harris D.E."/>
            <person name="Hidalgo J."/>
            <person name="Hodgson G."/>
            <person name="Holroyd S."/>
            <person name="Hornsby T."/>
            <person name="Howarth S."/>
            <person name="Huckle E.J."/>
            <person name="Hunt S."/>
            <person name="Jagels K."/>
            <person name="James K.D."/>
            <person name="Jones L."/>
            <person name="Jones M."/>
            <person name="Leather S."/>
            <person name="McDonald S."/>
            <person name="McLean J."/>
            <person name="Mooney P."/>
            <person name="Moule S."/>
            <person name="Mungall K.L."/>
            <person name="Murphy L.D."/>
            <person name="Niblett D."/>
            <person name="Odell C."/>
            <person name="Oliver K."/>
            <person name="O'Neil S."/>
            <person name="Pearson D."/>
            <person name="Quail M.A."/>
            <person name="Rabbinowitsch E."/>
            <person name="Rutherford K.M."/>
            <person name="Rutter S."/>
            <person name="Saunders D."/>
            <person name="Seeger K."/>
            <person name="Sharp S."/>
            <person name="Skelton J."/>
            <person name="Simmonds M.N."/>
            <person name="Squares R."/>
            <person name="Squares S."/>
            <person name="Stevens K."/>
            <person name="Taylor K."/>
            <person name="Taylor R.G."/>
            <person name="Tivey A."/>
            <person name="Walsh S.V."/>
            <person name="Warren T."/>
            <person name="Whitehead S."/>
            <person name="Woodward J.R."/>
            <person name="Volckaert G."/>
            <person name="Aert R."/>
            <person name="Robben J."/>
            <person name="Grymonprez B."/>
            <person name="Weltjens I."/>
            <person name="Vanstreels E."/>
            <person name="Rieger M."/>
            <person name="Schaefer M."/>
            <person name="Mueller-Auer S."/>
            <person name="Gabel C."/>
            <person name="Fuchs M."/>
            <person name="Duesterhoeft A."/>
            <person name="Fritzc C."/>
            <person name="Holzer E."/>
            <person name="Moestl D."/>
            <person name="Hilbert H."/>
            <person name="Borzym K."/>
            <person name="Langer I."/>
            <person name="Beck A."/>
            <person name="Lehrach H."/>
            <person name="Reinhardt R."/>
            <person name="Pohl T.M."/>
            <person name="Eger P."/>
            <person name="Zimmermann W."/>
            <person name="Wedler H."/>
            <person name="Wambutt R."/>
            <person name="Purnelle B."/>
            <person name="Goffeau A."/>
            <person name="Cadieu E."/>
            <person name="Dreano S."/>
            <person name="Gloux S."/>
            <person name="Lelaure V."/>
            <person name="Mottier S."/>
            <person name="Galibert F."/>
            <person name="Aves S.J."/>
            <person name="Xiang Z."/>
            <person name="Hunt C."/>
            <person name="Moore K."/>
            <person name="Hurst S.M."/>
            <person name="Lucas M."/>
            <person name="Rochet M."/>
            <person name="Gaillardin C."/>
            <person name="Tallada V.A."/>
            <person name="Garzon A."/>
            <person name="Thode G."/>
            <person name="Daga R.R."/>
            <person name="Cruzado L."/>
            <person name="Jimenez J."/>
            <person name="Sanchez M."/>
            <person name="del Rey F."/>
            <person name="Benito J."/>
            <person name="Dominguez A."/>
            <person name="Revuelta J.L."/>
            <person name="Moreno S."/>
            <person name="Armstrong J."/>
            <person name="Forsburg S.L."/>
            <person name="Cerutti L."/>
            <person name="Lowe T."/>
            <person name="McCombie W.R."/>
            <person name="Paulsen I."/>
            <person name="Potashkin J."/>
            <person name="Shpakovski G.V."/>
            <person name="Ussery D."/>
            <person name="Barrell B.G."/>
            <person name="Nurse P."/>
        </authorList>
    </citation>
    <scope>NUCLEOTIDE SEQUENCE [LARGE SCALE GENOMIC DNA]</scope>
    <source>
        <strain>972 / ATCC 24843</strain>
    </source>
</reference>
<reference key="2">
    <citation type="journal article" date="2006" name="Nat. Biotechnol.">
        <title>ORFeome cloning and global analysis of protein localization in the fission yeast Schizosaccharomyces pombe.</title>
        <authorList>
            <person name="Matsuyama A."/>
            <person name="Arai R."/>
            <person name="Yashiroda Y."/>
            <person name="Shirai A."/>
            <person name="Kamata A."/>
            <person name="Sekido S."/>
            <person name="Kobayashi Y."/>
            <person name="Hashimoto A."/>
            <person name="Hamamoto M."/>
            <person name="Hiraoka Y."/>
            <person name="Horinouchi S."/>
            <person name="Yoshida M."/>
        </authorList>
    </citation>
    <scope>SUBCELLULAR LOCATION [LARGE SCALE ANALYSIS]</scope>
</reference>
<keyword id="KW-0963">Cytoplasm</keyword>
<keyword id="KW-0238">DNA-binding</keyword>
<keyword id="KW-0472">Membrane</keyword>
<keyword id="KW-0479">Metal-binding</keyword>
<keyword id="KW-0539">Nucleus</keyword>
<keyword id="KW-1185">Reference proteome</keyword>
<keyword id="KW-0804">Transcription</keyword>
<keyword id="KW-0805">Transcription regulation</keyword>
<keyword id="KW-0812">Transmembrane</keyword>
<keyword id="KW-1133">Transmembrane helix</keyword>
<keyword id="KW-0862">Zinc</keyword>
<evidence type="ECO:0000255" key="1"/>
<evidence type="ECO:0000255" key="2">
    <source>
        <dbReference type="PROSITE-ProRule" id="PRU00227"/>
    </source>
</evidence>
<evidence type="ECO:0000256" key="3">
    <source>
        <dbReference type="SAM" id="MobiDB-lite"/>
    </source>
</evidence>
<evidence type="ECO:0000269" key="4">
    <source>
    </source>
</evidence>
<name>YN28_SCHPO</name>
<proteinExistence type="inferred from homology"/>
<dbReference type="EMBL" id="CU329671">
    <property type="protein sequence ID" value="CAA19174.1"/>
    <property type="molecule type" value="Genomic_DNA"/>
</dbReference>
<dbReference type="PIR" id="T40524">
    <property type="entry name" value="T40524"/>
</dbReference>
<dbReference type="SMR" id="O59744"/>
<dbReference type="BioGRID" id="276790">
    <property type="interactions" value="2"/>
</dbReference>
<dbReference type="iPTMnet" id="O59744"/>
<dbReference type="PaxDb" id="4896-SPBC530.08.1"/>
<dbReference type="EnsemblFungi" id="SPBC530.08.1">
    <property type="protein sequence ID" value="SPBC530.08.1:pep"/>
    <property type="gene ID" value="SPBC530.08"/>
</dbReference>
<dbReference type="KEGG" id="spo:2540259"/>
<dbReference type="PomBase" id="SPBC530.08"/>
<dbReference type="VEuPathDB" id="FungiDB:SPBC530.08"/>
<dbReference type="eggNOG" id="ENOG502QSY2">
    <property type="taxonomic scope" value="Eukaryota"/>
</dbReference>
<dbReference type="HOGENOM" id="CLU_373452_0_0_1"/>
<dbReference type="InParanoid" id="O59744"/>
<dbReference type="OMA" id="AHWRIAY"/>
<dbReference type="PhylomeDB" id="O59744"/>
<dbReference type="PRO" id="PR:O59744"/>
<dbReference type="Proteomes" id="UP000002485">
    <property type="component" value="Chromosome II"/>
</dbReference>
<dbReference type="GO" id="GO:0005829">
    <property type="term" value="C:cytosol"/>
    <property type="evidence" value="ECO:0007005"/>
    <property type="project" value="PomBase"/>
</dbReference>
<dbReference type="GO" id="GO:0016020">
    <property type="term" value="C:membrane"/>
    <property type="evidence" value="ECO:0000255"/>
    <property type="project" value="PomBase"/>
</dbReference>
<dbReference type="GO" id="GO:0031965">
    <property type="term" value="C:nuclear membrane"/>
    <property type="evidence" value="ECO:0007669"/>
    <property type="project" value="UniProtKB-SubCell"/>
</dbReference>
<dbReference type="GO" id="GO:0005634">
    <property type="term" value="C:nucleus"/>
    <property type="evidence" value="ECO:0007005"/>
    <property type="project" value="PomBase"/>
</dbReference>
<dbReference type="GO" id="GO:0000981">
    <property type="term" value="F:DNA-binding transcription factor activity, RNA polymerase II-specific"/>
    <property type="evidence" value="ECO:0000318"/>
    <property type="project" value="GO_Central"/>
</dbReference>
<dbReference type="GO" id="GO:0000978">
    <property type="term" value="F:RNA polymerase II cis-regulatory region sequence-specific DNA binding"/>
    <property type="evidence" value="ECO:0000255"/>
    <property type="project" value="PomBase"/>
</dbReference>
<dbReference type="GO" id="GO:0043565">
    <property type="term" value="F:sequence-specific DNA binding"/>
    <property type="evidence" value="ECO:0000318"/>
    <property type="project" value="GO_Central"/>
</dbReference>
<dbReference type="GO" id="GO:0008270">
    <property type="term" value="F:zinc ion binding"/>
    <property type="evidence" value="ECO:0000255"/>
    <property type="project" value="PomBase"/>
</dbReference>
<dbReference type="GO" id="GO:0006351">
    <property type="term" value="P:DNA-templated transcription"/>
    <property type="evidence" value="ECO:0007669"/>
    <property type="project" value="InterPro"/>
</dbReference>
<dbReference type="GO" id="GO:0045944">
    <property type="term" value="P:positive regulation of transcription by RNA polymerase II"/>
    <property type="evidence" value="ECO:0000318"/>
    <property type="project" value="GO_Central"/>
</dbReference>
<dbReference type="CDD" id="cd12148">
    <property type="entry name" value="fungal_TF_MHR"/>
    <property type="match status" value="1"/>
</dbReference>
<dbReference type="CDD" id="cd00067">
    <property type="entry name" value="GAL4"/>
    <property type="match status" value="1"/>
</dbReference>
<dbReference type="FunFam" id="4.10.240.10:FF:000018">
    <property type="entry name" value="Casein kinase II subunit beta"/>
    <property type="match status" value="1"/>
</dbReference>
<dbReference type="Gene3D" id="4.10.240.10">
    <property type="entry name" value="Zn(2)-C6 fungal-type DNA-binding domain"/>
    <property type="match status" value="1"/>
</dbReference>
<dbReference type="InterPro" id="IPR050987">
    <property type="entry name" value="AtrR-like"/>
</dbReference>
<dbReference type="InterPro" id="IPR007219">
    <property type="entry name" value="Transcription_factor_dom_fun"/>
</dbReference>
<dbReference type="InterPro" id="IPR036864">
    <property type="entry name" value="Zn2-C6_fun-type_DNA-bd_sf"/>
</dbReference>
<dbReference type="InterPro" id="IPR001138">
    <property type="entry name" value="Zn2Cys6_DnaBD"/>
</dbReference>
<dbReference type="PANTHER" id="PTHR46910:SF3">
    <property type="entry name" value="HALOTOLERANCE PROTEIN 9-RELATED"/>
    <property type="match status" value="1"/>
</dbReference>
<dbReference type="PANTHER" id="PTHR46910">
    <property type="entry name" value="TRANSCRIPTION FACTOR PDR1"/>
    <property type="match status" value="1"/>
</dbReference>
<dbReference type="Pfam" id="PF04082">
    <property type="entry name" value="Fungal_trans"/>
    <property type="match status" value="1"/>
</dbReference>
<dbReference type="Pfam" id="PF00172">
    <property type="entry name" value="Zn_clus"/>
    <property type="match status" value="1"/>
</dbReference>
<dbReference type="SMART" id="SM00906">
    <property type="entry name" value="Fungal_trans"/>
    <property type="match status" value="1"/>
</dbReference>
<dbReference type="SMART" id="SM00066">
    <property type="entry name" value="GAL4"/>
    <property type="match status" value="1"/>
</dbReference>
<dbReference type="SUPFAM" id="SSF57701">
    <property type="entry name" value="Zn2/Cys6 DNA-binding domain"/>
    <property type="match status" value="1"/>
</dbReference>
<dbReference type="PROSITE" id="PS00463">
    <property type="entry name" value="ZN2_CY6_FUNGAL_1"/>
    <property type="match status" value="1"/>
</dbReference>
<dbReference type="PROSITE" id="PS50048">
    <property type="entry name" value="ZN2_CY6_FUNGAL_2"/>
    <property type="match status" value="1"/>
</dbReference>
<accession>O59744</accession>
<protein>
    <recommendedName>
        <fullName>Uncharacterized transcriptional regulatory protein C530.08</fullName>
    </recommendedName>
</protein>
<feature type="chain" id="PRO_0000310391" description="Uncharacterized transcriptional regulatory protein C530.08">
    <location>
        <begin position="1"/>
        <end position="815"/>
    </location>
</feature>
<feature type="transmembrane region" description="Helical" evidence="1">
    <location>
        <begin position="560"/>
        <end position="580"/>
    </location>
</feature>
<feature type="DNA-binding region" description="Zn(2)-C6 fungal-type" evidence="2">
    <location>
        <begin position="31"/>
        <end position="57"/>
    </location>
</feature>
<feature type="region of interest" description="Disordered" evidence="3">
    <location>
        <begin position="646"/>
        <end position="668"/>
    </location>
</feature>
<feature type="region of interest" description="Disordered" evidence="3">
    <location>
        <begin position="769"/>
        <end position="792"/>
    </location>
</feature>
<feature type="compositionally biased region" description="Polar residues" evidence="3">
    <location>
        <begin position="780"/>
        <end position="792"/>
    </location>
</feature>